<sequence length="226" mass="26422">MEQSKSASDKLAERKARLLDLHKKRQEARTDNHQEVVAEDARKKLPKNWEARKRQAEWLLADDKAREDAQAAGKDYERLKLLEVSAIDAERIEKKKKRKDNPDLGFSTYEAQTARQYSRLVKGMPARDMEKYEKQKAELGEAFYGGPHTTLHALTKDTPAAINKMVNDLDQQIERRKKYSRRRIYNDDADVDFINERNSKFNKKLDRFYGEHTAEIKQNLERGTAI</sequence>
<organism>
    <name type="scientific">Drosophila pseudoobscura pseudoobscura</name>
    <name type="common">Fruit fly</name>
    <dbReference type="NCBI Taxonomy" id="46245"/>
    <lineage>
        <taxon>Eukaryota</taxon>
        <taxon>Metazoa</taxon>
        <taxon>Ecdysozoa</taxon>
        <taxon>Arthropoda</taxon>
        <taxon>Hexapoda</taxon>
        <taxon>Insecta</taxon>
        <taxon>Pterygota</taxon>
        <taxon>Neoptera</taxon>
        <taxon>Endopterygota</taxon>
        <taxon>Diptera</taxon>
        <taxon>Brachycera</taxon>
        <taxon>Muscomorpha</taxon>
        <taxon>Ephydroidea</taxon>
        <taxon>Drosophilidae</taxon>
        <taxon>Drosophila</taxon>
        <taxon>Sophophora</taxon>
    </lineage>
</organism>
<evidence type="ECO:0000250" key="1">
    <source>
        <dbReference type="UniProtKB" id="O95926"/>
    </source>
</evidence>
<evidence type="ECO:0000255" key="2"/>
<evidence type="ECO:0000256" key="3">
    <source>
        <dbReference type="SAM" id="MobiDB-lite"/>
    </source>
</evidence>
<evidence type="ECO:0000305" key="4"/>
<accession>Q28XK6</accession>
<protein>
    <recommendedName>
        <fullName>Pre-mRNA-splicing factor Syf2</fullName>
    </recommendedName>
</protein>
<name>SYF2_DROPS</name>
<comment type="function">
    <text evidence="1">Involved in pre-mRNA splicing as component of the spliceosome.</text>
</comment>
<comment type="subunit">
    <text evidence="1">Identified in the spliceosome C complex.</text>
</comment>
<comment type="subcellular location">
    <subcellularLocation>
        <location evidence="1">Nucleus</location>
    </subcellularLocation>
</comment>
<comment type="similarity">
    <text evidence="4">Belongs to the SYF2 family.</text>
</comment>
<gene>
    <name type="primary">Syf2</name>
    <name type="ORF">GA11568</name>
</gene>
<feature type="chain" id="PRO_0000250385" description="Pre-mRNA-splicing factor Syf2">
    <location>
        <begin position="1"/>
        <end position="226"/>
    </location>
</feature>
<feature type="region of interest" description="Disordered" evidence="3">
    <location>
        <begin position="22"/>
        <end position="41"/>
    </location>
</feature>
<feature type="coiled-coil region" evidence="2">
    <location>
        <begin position="9"/>
        <end position="29"/>
    </location>
</feature>
<reference key="1">
    <citation type="journal article" date="2005" name="Genome Res.">
        <title>Comparative genome sequencing of Drosophila pseudoobscura: chromosomal, gene, and cis-element evolution.</title>
        <authorList>
            <person name="Richards S."/>
            <person name="Liu Y."/>
            <person name="Bettencourt B.R."/>
            <person name="Hradecky P."/>
            <person name="Letovsky S."/>
            <person name="Nielsen R."/>
            <person name="Thornton K."/>
            <person name="Hubisz M.J."/>
            <person name="Chen R."/>
            <person name="Meisel R.P."/>
            <person name="Couronne O."/>
            <person name="Hua S."/>
            <person name="Smith M.A."/>
            <person name="Zhang P."/>
            <person name="Liu J."/>
            <person name="Bussemaker H.J."/>
            <person name="van Batenburg M.F."/>
            <person name="Howells S.L."/>
            <person name="Scherer S.E."/>
            <person name="Sodergren E."/>
            <person name="Matthews B.B."/>
            <person name="Crosby M.A."/>
            <person name="Schroeder A.J."/>
            <person name="Ortiz-Barrientos D."/>
            <person name="Rives C.M."/>
            <person name="Metzker M.L."/>
            <person name="Muzny D.M."/>
            <person name="Scott G."/>
            <person name="Steffen D."/>
            <person name="Wheeler D.A."/>
            <person name="Worley K.C."/>
            <person name="Havlak P."/>
            <person name="Durbin K.J."/>
            <person name="Egan A."/>
            <person name="Gill R."/>
            <person name="Hume J."/>
            <person name="Morgan M.B."/>
            <person name="Miner G."/>
            <person name="Hamilton C."/>
            <person name="Huang Y."/>
            <person name="Waldron L."/>
            <person name="Verduzco D."/>
            <person name="Clerc-Blankenburg K.P."/>
            <person name="Dubchak I."/>
            <person name="Noor M.A.F."/>
            <person name="Anderson W."/>
            <person name="White K.P."/>
            <person name="Clark A.G."/>
            <person name="Schaeffer S.W."/>
            <person name="Gelbart W.M."/>
            <person name="Weinstock G.M."/>
            <person name="Gibbs R.A."/>
        </authorList>
    </citation>
    <scope>NUCLEOTIDE SEQUENCE [LARGE SCALE GENOMIC DNA]</scope>
    <source>
        <strain>MV2-25 / Tucson 14011-0121.94</strain>
    </source>
</reference>
<proteinExistence type="inferred from homology"/>
<keyword id="KW-0175">Coiled coil</keyword>
<keyword id="KW-0507">mRNA processing</keyword>
<keyword id="KW-0508">mRNA splicing</keyword>
<keyword id="KW-0539">Nucleus</keyword>
<keyword id="KW-1185">Reference proteome</keyword>
<keyword id="KW-0747">Spliceosome</keyword>
<dbReference type="EMBL" id="CM000071">
    <property type="protein sequence ID" value="EAL26310.1"/>
    <property type="molecule type" value="Genomic_DNA"/>
</dbReference>
<dbReference type="SMR" id="Q28XK6"/>
<dbReference type="FunCoup" id="Q28XK6">
    <property type="interactions" value="1109"/>
</dbReference>
<dbReference type="STRING" id="46245.Q28XK6"/>
<dbReference type="EnsemblMetazoa" id="FBtr0280091">
    <property type="protein sequence ID" value="FBpp0278529"/>
    <property type="gene ID" value="FBgn0071619"/>
</dbReference>
<dbReference type="GeneID" id="4805311"/>
<dbReference type="KEGG" id="dpo:4805311"/>
<dbReference type="eggNOG" id="KOG2609">
    <property type="taxonomic scope" value="Eukaryota"/>
</dbReference>
<dbReference type="HOGENOM" id="CLU_051065_3_0_1"/>
<dbReference type="InParanoid" id="Q28XK6"/>
<dbReference type="OMA" id="RRRMHND"/>
<dbReference type="PhylomeDB" id="Q28XK6"/>
<dbReference type="Proteomes" id="UP000001819">
    <property type="component" value="Chromosome 3"/>
</dbReference>
<dbReference type="Bgee" id="FBgn0071619">
    <property type="expression patterns" value="Expressed in female reproductive system and 2 other cell types or tissues"/>
</dbReference>
<dbReference type="GO" id="GO:0005634">
    <property type="term" value="C:nucleus"/>
    <property type="evidence" value="ECO:0000250"/>
    <property type="project" value="UniProtKB"/>
</dbReference>
<dbReference type="GO" id="GO:0000974">
    <property type="term" value="C:Prp19 complex"/>
    <property type="evidence" value="ECO:0007669"/>
    <property type="project" value="TreeGrafter"/>
</dbReference>
<dbReference type="GO" id="GO:0071006">
    <property type="term" value="C:U2-type catalytic step 1 spliceosome"/>
    <property type="evidence" value="ECO:0000250"/>
    <property type="project" value="UniProtKB"/>
</dbReference>
<dbReference type="GO" id="GO:0071007">
    <property type="term" value="C:U2-type catalytic step 2 spliceosome"/>
    <property type="evidence" value="ECO:0000250"/>
    <property type="project" value="UniProtKB"/>
</dbReference>
<dbReference type="GO" id="GO:0071008">
    <property type="term" value="C:U2-type post-mRNA release spliceosomal complex"/>
    <property type="evidence" value="ECO:0000250"/>
    <property type="project" value="UniProtKB"/>
</dbReference>
<dbReference type="GO" id="GO:0071004">
    <property type="term" value="C:U2-type prespliceosome"/>
    <property type="evidence" value="ECO:0000250"/>
    <property type="project" value="UniProtKB"/>
</dbReference>
<dbReference type="GO" id="GO:0000398">
    <property type="term" value="P:mRNA splicing, via spliceosome"/>
    <property type="evidence" value="ECO:0000250"/>
    <property type="project" value="UniProtKB"/>
</dbReference>
<dbReference type="InterPro" id="IPR013260">
    <property type="entry name" value="mRNA_splic_SYF2"/>
</dbReference>
<dbReference type="PANTHER" id="PTHR13264">
    <property type="entry name" value="GCIP-INTERACTING PROTEIN P29"/>
    <property type="match status" value="1"/>
</dbReference>
<dbReference type="PANTHER" id="PTHR13264:SF5">
    <property type="entry name" value="PRE-MRNA-SPLICING FACTOR SYF2"/>
    <property type="match status" value="1"/>
</dbReference>
<dbReference type="Pfam" id="PF08231">
    <property type="entry name" value="SYF2"/>
    <property type="match status" value="1"/>
</dbReference>